<comment type="caution">
    <text evidence="2">Could be the product of a pseudogene.</text>
</comment>
<dbReference type="EMBL" id="U00096">
    <property type="status" value="NOT_ANNOTATED_CDS"/>
    <property type="molecule type" value="Genomic_DNA"/>
</dbReference>
<dbReference type="EMBL" id="AP009048">
    <property type="protein sequence ID" value="BAE76455.1"/>
    <property type="molecule type" value="Genomic_DNA"/>
</dbReference>
<dbReference type="PIR" id="E64904">
    <property type="entry name" value="E64904"/>
</dbReference>
<dbReference type="SMR" id="P76138"/>
<dbReference type="BioGRID" id="4260203">
    <property type="interactions" value="9"/>
</dbReference>
<dbReference type="FunCoup" id="P76138">
    <property type="interactions" value="4"/>
</dbReference>
<dbReference type="KEGG" id="ecj:JW5244"/>
<dbReference type="KEGG" id="ecoc:C3026_08715"/>
<dbReference type="PATRIC" id="fig|83333.103.peg.2336"/>
<dbReference type="eggNOG" id="COG4977">
    <property type="taxonomic scope" value="Bacteria"/>
</dbReference>
<dbReference type="HOGENOM" id="CLU_197431_0_0_6"/>
<dbReference type="InParanoid" id="P76138"/>
<dbReference type="Proteomes" id="UP000000625">
    <property type="component" value="Chromosome"/>
</dbReference>
<dbReference type="GO" id="GO:0003700">
    <property type="term" value="F:DNA-binding transcription factor activity"/>
    <property type="evidence" value="ECO:0007669"/>
    <property type="project" value="InterPro"/>
</dbReference>
<dbReference type="GO" id="GO:0043565">
    <property type="term" value="F:sequence-specific DNA binding"/>
    <property type="evidence" value="ECO:0007669"/>
    <property type="project" value="InterPro"/>
</dbReference>
<dbReference type="Gene3D" id="1.10.10.60">
    <property type="entry name" value="Homeodomain-like"/>
    <property type="match status" value="1"/>
</dbReference>
<dbReference type="InterPro" id="IPR018060">
    <property type="entry name" value="HTH_AraC"/>
</dbReference>
<dbReference type="PROSITE" id="PS01124">
    <property type="entry name" value="HTH_ARAC_FAMILY_2"/>
    <property type="match status" value="1"/>
</dbReference>
<name>YNEL_ECOLI</name>
<reference key="1">
    <citation type="journal article" date="1997" name="Science">
        <title>The complete genome sequence of Escherichia coli K-12.</title>
        <authorList>
            <person name="Blattner F.R."/>
            <person name="Plunkett G. III"/>
            <person name="Bloch C.A."/>
            <person name="Perna N.T."/>
            <person name="Burland V."/>
            <person name="Riley M."/>
            <person name="Collado-Vides J."/>
            <person name="Glasner J.D."/>
            <person name="Rode C.K."/>
            <person name="Mayhew G.F."/>
            <person name="Gregor J."/>
            <person name="Davis N.W."/>
            <person name="Kirkpatrick H.A."/>
            <person name="Goeden M.A."/>
            <person name="Rose D.J."/>
            <person name="Mau B."/>
            <person name="Shao Y."/>
        </authorList>
    </citation>
    <scope>NUCLEOTIDE SEQUENCE [LARGE SCALE GENOMIC DNA]</scope>
    <source>
        <strain>K12 / MG1655 / ATCC 47076</strain>
    </source>
</reference>
<reference key="2">
    <citation type="journal article" date="2006" name="Mol. Syst. Biol.">
        <title>Highly accurate genome sequences of Escherichia coli K-12 strains MG1655 and W3110.</title>
        <authorList>
            <person name="Hayashi K."/>
            <person name="Morooka N."/>
            <person name="Yamamoto Y."/>
            <person name="Fujita K."/>
            <person name="Isono K."/>
            <person name="Choi S."/>
            <person name="Ohtsubo E."/>
            <person name="Baba T."/>
            <person name="Wanner B.L."/>
            <person name="Mori H."/>
            <person name="Horiuchi T."/>
        </authorList>
    </citation>
    <scope>NUCLEOTIDE SEQUENCE [LARGE SCALE GENOMIC DNA]</scope>
    <source>
        <strain>K12 / W3110 / ATCC 27325 / DSM 5911</strain>
    </source>
</reference>
<feature type="chain" id="PRO_0000273578" description="Putative HTH-type transcriptional regulator YneL">
    <location>
        <begin position="1"/>
        <end position="59"/>
    </location>
</feature>
<feature type="domain" description="HTH araC/xylS-type" evidence="1">
    <location>
        <begin position="1"/>
        <end position="59"/>
    </location>
</feature>
<feature type="DNA-binding region" description="H-T-H motif" evidence="1">
    <location>
        <begin position="26"/>
        <end position="49"/>
    </location>
</feature>
<accession>P76138</accession>
<accession>Q2MBA1</accession>
<organism>
    <name type="scientific">Escherichia coli (strain K12)</name>
    <dbReference type="NCBI Taxonomy" id="83333"/>
    <lineage>
        <taxon>Bacteria</taxon>
        <taxon>Pseudomonadati</taxon>
        <taxon>Pseudomonadota</taxon>
        <taxon>Gammaproteobacteria</taxon>
        <taxon>Enterobacterales</taxon>
        <taxon>Enterobacteriaceae</taxon>
        <taxon>Escherichia</taxon>
    </lineage>
</organism>
<keyword id="KW-0238">DNA-binding</keyword>
<keyword id="KW-1185">Reference proteome</keyword>
<keyword id="KW-0804">Transcription</keyword>
<keyword id="KW-0805">Transcription regulation</keyword>
<protein>
    <recommendedName>
        <fullName>Putative HTH-type transcriptional regulator YneL</fullName>
    </recommendedName>
</protein>
<gene>
    <name type="primary">yneL</name>
    <name type="ordered locus">b1506</name>
    <name type="ordered locus">JW5244</name>
</gene>
<sequence>MSPLRYQKWLRLNEVRRQMLNEHYDVTTAAYAVGYESYPISVGNIRGCLESHPREILPG</sequence>
<proteinExistence type="uncertain"/>
<evidence type="ECO:0000255" key="1">
    <source>
        <dbReference type="PROSITE-ProRule" id="PRU00593"/>
    </source>
</evidence>
<evidence type="ECO:0000305" key="2"/>